<keyword id="KW-0614">Plasmid</keyword>
<geneLocation type="plasmid">
    <name>pMLb</name>
</geneLocation>
<name>Y9551_RHILO</name>
<protein>
    <recommendedName>
        <fullName>UPF0337 protein msl9551</fullName>
    </recommendedName>
</protein>
<evidence type="ECO:0000305" key="1"/>
<gene>
    <name type="ordered locus">msl9551</name>
</gene>
<accession>Q98PA0</accession>
<reference key="1">
    <citation type="journal article" date="2000" name="DNA Res.">
        <title>Complete genome structure of the nitrogen-fixing symbiotic bacterium Mesorhizobium loti.</title>
        <authorList>
            <person name="Kaneko T."/>
            <person name="Nakamura Y."/>
            <person name="Sato S."/>
            <person name="Asamizu E."/>
            <person name="Kato T."/>
            <person name="Sasamoto S."/>
            <person name="Watanabe A."/>
            <person name="Idesawa K."/>
            <person name="Ishikawa A."/>
            <person name="Kawashima K."/>
            <person name="Kimura T."/>
            <person name="Kishida Y."/>
            <person name="Kiyokawa C."/>
            <person name="Kohara M."/>
            <person name="Matsumoto M."/>
            <person name="Matsuno A."/>
            <person name="Mochizuki Y."/>
            <person name="Nakayama S."/>
            <person name="Nakazaki N."/>
            <person name="Shimpo S."/>
            <person name="Sugimoto M."/>
            <person name="Takeuchi C."/>
            <person name="Yamada M."/>
            <person name="Tabata S."/>
        </authorList>
    </citation>
    <scope>NUCLEOTIDE SEQUENCE [LARGE SCALE GENOMIC DNA]</scope>
    <source>
        <strain>LMG 29417 / CECT 9101 / MAFF 303099</strain>
    </source>
</reference>
<sequence length="67" mass="8221">MDWNRVEGNWKQVKGKVKEQWGKLTDDDLDRIAGKRDQLEGKIQERYGIERDRARRDIDDWYNRQGW</sequence>
<feature type="chain" id="PRO_0000210022" description="UPF0337 protein msl9551">
    <location>
        <begin position="1"/>
        <end position="67"/>
    </location>
</feature>
<organism>
    <name type="scientific">Mesorhizobium japonicum (strain LMG 29417 / CECT 9101 / MAFF 303099)</name>
    <name type="common">Mesorhizobium loti (strain MAFF 303099)</name>
    <dbReference type="NCBI Taxonomy" id="266835"/>
    <lineage>
        <taxon>Bacteria</taxon>
        <taxon>Pseudomonadati</taxon>
        <taxon>Pseudomonadota</taxon>
        <taxon>Alphaproteobacteria</taxon>
        <taxon>Hyphomicrobiales</taxon>
        <taxon>Phyllobacteriaceae</taxon>
        <taxon>Mesorhizobium</taxon>
    </lineage>
</organism>
<proteinExistence type="inferred from homology"/>
<comment type="similarity">
    <text evidence="1">Belongs to the UPF0337 (CsbD) family.</text>
</comment>
<comment type="sequence caution" evidence="1">
    <conflict type="erroneous initiation">
        <sequence resource="EMBL-CDS" id="BAB54755"/>
    </conflict>
</comment>
<dbReference type="EMBL" id="AP003017">
    <property type="protein sequence ID" value="BAB54755.1"/>
    <property type="status" value="ALT_INIT"/>
    <property type="molecule type" value="Genomic_DNA"/>
</dbReference>
<dbReference type="RefSeq" id="WP_080511760.1">
    <property type="nucleotide sequence ID" value="NC_002682.1"/>
</dbReference>
<dbReference type="SMR" id="Q98PA0"/>
<dbReference type="KEGG" id="mlo:msl9551"/>
<dbReference type="eggNOG" id="COG3237">
    <property type="taxonomic scope" value="Bacteria"/>
</dbReference>
<dbReference type="HOGENOM" id="CLU_135567_4_1_5"/>
<dbReference type="Proteomes" id="UP000000552">
    <property type="component" value="Plasmid pMLb"/>
</dbReference>
<dbReference type="Gene3D" id="1.10.1470.10">
    <property type="entry name" value="YjbJ"/>
    <property type="match status" value="1"/>
</dbReference>
<dbReference type="InterPro" id="IPR008462">
    <property type="entry name" value="CsbD"/>
</dbReference>
<dbReference type="InterPro" id="IPR050423">
    <property type="entry name" value="UPF0337_stress_rsp"/>
</dbReference>
<dbReference type="InterPro" id="IPR026042">
    <property type="entry name" value="YjbJ"/>
</dbReference>
<dbReference type="InterPro" id="IPR036629">
    <property type="entry name" value="YjbJ_sf"/>
</dbReference>
<dbReference type="PANTHER" id="PTHR34977">
    <property type="entry name" value="UPF0337 PROTEIN YJBJ"/>
    <property type="match status" value="1"/>
</dbReference>
<dbReference type="PANTHER" id="PTHR34977:SF1">
    <property type="entry name" value="UPF0337 PROTEIN YJBJ"/>
    <property type="match status" value="1"/>
</dbReference>
<dbReference type="Pfam" id="PF05532">
    <property type="entry name" value="CsbD"/>
    <property type="match status" value="1"/>
</dbReference>
<dbReference type="PIRSF" id="PIRSF039008">
    <property type="entry name" value="YjbJ"/>
    <property type="match status" value="1"/>
</dbReference>
<dbReference type="SUPFAM" id="SSF69047">
    <property type="entry name" value="Hypothetical protein YjbJ"/>
    <property type="match status" value="1"/>
</dbReference>